<organism>
    <name type="scientific">Escherichia coli O81 (strain ED1a)</name>
    <dbReference type="NCBI Taxonomy" id="585397"/>
    <lineage>
        <taxon>Bacteria</taxon>
        <taxon>Pseudomonadati</taxon>
        <taxon>Pseudomonadota</taxon>
        <taxon>Gammaproteobacteria</taxon>
        <taxon>Enterobacterales</taxon>
        <taxon>Enterobacteriaceae</taxon>
        <taxon>Escherichia</taxon>
    </lineage>
</organism>
<comment type="function">
    <text evidence="1">A key translational regulator that binds mRNA to regulate translation initiation and/or mRNA stability. Mediates global changes in gene expression, shifting from rapid growth to stress survival by linking envelope stress, the stringent response and the catabolite repression systems. Usually binds in the 5'-UTR; binding at or near the Shine-Dalgarno sequence prevents ribosome-binding, repressing translation, binding elsewhere in the 5'-UTR can activate translation and/or stabilize the mRNA. Its function is antagonized by small RNA(s).</text>
</comment>
<comment type="subunit">
    <text evidence="1">Homodimer; the beta-strands of each monomer intercalate to form a hydrophobic core, while the alpha-helices form wings that extend away from the core.</text>
</comment>
<comment type="subcellular location">
    <subcellularLocation>
        <location evidence="1">Cytoplasm</location>
    </subcellularLocation>
</comment>
<comment type="similarity">
    <text evidence="1">Belongs to the CsrA/RsmA family.</text>
</comment>
<protein>
    <recommendedName>
        <fullName evidence="1">Translational regulator CsrA</fullName>
    </recommendedName>
    <alternativeName>
        <fullName evidence="1">Carbon storage regulator</fullName>
    </alternativeName>
</protein>
<sequence length="61" mass="6856">MLILTRRVGETLMIGDEVTVTVLGVKGNQVRIGVNAPKEVSVHREEIYQRIQAEKSQQSSY</sequence>
<keyword id="KW-0010">Activator</keyword>
<keyword id="KW-0963">Cytoplasm</keyword>
<keyword id="KW-0678">Repressor</keyword>
<keyword id="KW-0694">RNA-binding</keyword>
<keyword id="KW-0810">Translation regulation</keyword>
<proteinExistence type="inferred from homology"/>
<reference key="1">
    <citation type="journal article" date="2009" name="PLoS Genet.">
        <title>Organised genome dynamics in the Escherichia coli species results in highly diverse adaptive paths.</title>
        <authorList>
            <person name="Touchon M."/>
            <person name="Hoede C."/>
            <person name="Tenaillon O."/>
            <person name="Barbe V."/>
            <person name="Baeriswyl S."/>
            <person name="Bidet P."/>
            <person name="Bingen E."/>
            <person name="Bonacorsi S."/>
            <person name="Bouchier C."/>
            <person name="Bouvet O."/>
            <person name="Calteau A."/>
            <person name="Chiapello H."/>
            <person name="Clermont O."/>
            <person name="Cruveiller S."/>
            <person name="Danchin A."/>
            <person name="Diard M."/>
            <person name="Dossat C."/>
            <person name="Karoui M.E."/>
            <person name="Frapy E."/>
            <person name="Garry L."/>
            <person name="Ghigo J.M."/>
            <person name="Gilles A.M."/>
            <person name="Johnson J."/>
            <person name="Le Bouguenec C."/>
            <person name="Lescat M."/>
            <person name="Mangenot S."/>
            <person name="Martinez-Jehanne V."/>
            <person name="Matic I."/>
            <person name="Nassif X."/>
            <person name="Oztas S."/>
            <person name="Petit M.A."/>
            <person name="Pichon C."/>
            <person name="Rouy Z."/>
            <person name="Ruf C.S."/>
            <person name="Schneider D."/>
            <person name="Tourret J."/>
            <person name="Vacherie B."/>
            <person name="Vallenet D."/>
            <person name="Medigue C."/>
            <person name="Rocha E.P.C."/>
            <person name="Denamur E."/>
        </authorList>
    </citation>
    <scope>NUCLEOTIDE SEQUENCE [LARGE SCALE GENOMIC DNA]</scope>
    <source>
        <strain>ED1a</strain>
    </source>
</reference>
<evidence type="ECO:0000255" key="1">
    <source>
        <dbReference type="HAMAP-Rule" id="MF_00167"/>
    </source>
</evidence>
<gene>
    <name evidence="1" type="primary">csrA</name>
    <name type="ordered locus">ECED1_3145</name>
</gene>
<dbReference type="EMBL" id="CU928162">
    <property type="protein sequence ID" value="CAR09310.2"/>
    <property type="molecule type" value="Genomic_DNA"/>
</dbReference>
<dbReference type="RefSeq" id="WP_000906486.1">
    <property type="nucleotide sequence ID" value="NC_011745.1"/>
</dbReference>
<dbReference type="SMR" id="B7MYZ3"/>
<dbReference type="GeneID" id="98389839"/>
<dbReference type="KEGG" id="ecq:ECED1_3145"/>
<dbReference type="HOGENOM" id="CLU_164837_2_1_6"/>
<dbReference type="Proteomes" id="UP000000748">
    <property type="component" value="Chromosome"/>
</dbReference>
<dbReference type="GO" id="GO:0005829">
    <property type="term" value="C:cytosol"/>
    <property type="evidence" value="ECO:0007669"/>
    <property type="project" value="TreeGrafter"/>
</dbReference>
<dbReference type="GO" id="GO:0048027">
    <property type="term" value="F:mRNA 5'-UTR binding"/>
    <property type="evidence" value="ECO:0007669"/>
    <property type="project" value="UniProtKB-UniRule"/>
</dbReference>
<dbReference type="GO" id="GO:0006402">
    <property type="term" value="P:mRNA catabolic process"/>
    <property type="evidence" value="ECO:0007669"/>
    <property type="project" value="InterPro"/>
</dbReference>
<dbReference type="GO" id="GO:0045947">
    <property type="term" value="P:negative regulation of translational initiation"/>
    <property type="evidence" value="ECO:0007669"/>
    <property type="project" value="UniProtKB-UniRule"/>
</dbReference>
<dbReference type="GO" id="GO:0045948">
    <property type="term" value="P:positive regulation of translational initiation"/>
    <property type="evidence" value="ECO:0007669"/>
    <property type="project" value="UniProtKB-UniRule"/>
</dbReference>
<dbReference type="GO" id="GO:0006109">
    <property type="term" value="P:regulation of carbohydrate metabolic process"/>
    <property type="evidence" value="ECO:0007669"/>
    <property type="project" value="UniProtKB-UniRule"/>
</dbReference>
<dbReference type="FunFam" id="2.60.40.4380:FF:000001">
    <property type="entry name" value="Translational regulator CsrA"/>
    <property type="match status" value="1"/>
</dbReference>
<dbReference type="Gene3D" id="2.60.40.4380">
    <property type="entry name" value="Translational regulator CsrA"/>
    <property type="match status" value="1"/>
</dbReference>
<dbReference type="HAMAP" id="MF_00167">
    <property type="entry name" value="CsrA"/>
    <property type="match status" value="1"/>
</dbReference>
<dbReference type="InterPro" id="IPR003751">
    <property type="entry name" value="CsrA"/>
</dbReference>
<dbReference type="InterPro" id="IPR036107">
    <property type="entry name" value="CsrA_sf"/>
</dbReference>
<dbReference type="NCBIfam" id="TIGR00202">
    <property type="entry name" value="csrA"/>
    <property type="match status" value="1"/>
</dbReference>
<dbReference type="NCBIfam" id="NF002469">
    <property type="entry name" value="PRK01712.1"/>
    <property type="match status" value="1"/>
</dbReference>
<dbReference type="PANTHER" id="PTHR34984">
    <property type="entry name" value="CARBON STORAGE REGULATOR"/>
    <property type="match status" value="1"/>
</dbReference>
<dbReference type="PANTHER" id="PTHR34984:SF1">
    <property type="entry name" value="CARBON STORAGE REGULATOR"/>
    <property type="match status" value="1"/>
</dbReference>
<dbReference type="Pfam" id="PF02599">
    <property type="entry name" value="CsrA"/>
    <property type="match status" value="1"/>
</dbReference>
<dbReference type="SUPFAM" id="SSF117130">
    <property type="entry name" value="CsrA-like"/>
    <property type="match status" value="1"/>
</dbReference>
<accession>B7MYZ3</accession>
<feature type="chain" id="PRO_1000123627" description="Translational regulator CsrA">
    <location>
        <begin position="1"/>
        <end position="61"/>
    </location>
</feature>
<name>CSRA_ECO81</name>